<sequence>MGLPWYRVHTVVLNDPGRLLSVHIMHTALVSGWAGSMALYELAVFDPSDPVLDPMWRQGMFVIPFMTRLGITNSWGGWSISGGTVTNPGIWSYEGVAGAHIVFSGLCFLAAIWHWVYWDLEIFCDERTGKPSLDLPKIFGIHLFLAGVACFGFGAFHVTGLYGPGIWVSDPYGLTGKVQAVNPAWGAEGFDPFVPGGIASHHIAAGTLGILAGLFHLSVRPPQRLYKGLRMGNIETVLSSSIAAVFFAAFVVAGTMWYGSATTPIELFGPTRYQWDQGYFQQEIYRRVSDGLAENLSLSEAWSKIPEKLAFYDYIGNNPAKGGLFRAGSMDNGDGIAVGWLGHPVFRDKEGRELFVRRMPTFFETFPVVLVDEEGIVRADVPFRRAESKYSVEQVGVTVEFYGGELNGVSYSDPATVKKYARRAQLGEIFELDRATLKSDGVFRSSPRGWFTFGHATFALLFFFGHIWHGARTLFRDVFAGIDPDLDAQVEFGTFQKVGDPTTRRQAA</sequence>
<accession>P05641</accession>
<keyword id="KW-0148">Chlorophyll</keyword>
<keyword id="KW-0150">Chloroplast</keyword>
<keyword id="KW-0157">Chromophore</keyword>
<keyword id="KW-0472">Membrane</keyword>
<keyword id="KW-0602">Photosynthesis</keyword>
<keyword id="KW-0604">Photosystem II</keyword>
<keyword id="KW-0934">Plastid</keyword>
<keyword id="KW-1185">Reference proteome</keyword>
<keyword id="KW-0793">Thylakoid</keyword>
<keyword id="KW-0812">Transmembrane</keyword>
<keyword id="KW-1133">Transmembrane helix</keyword>
<comment type="function">
    <text evidence="1">One of the components of the core complex of photosystem II (PSII). It binds chlorophyll and helps catalyze the primary light-induced photochemical processes of PSII. PSII is a light-driven water:plastoquinone oxidoreductase, using light energy to abstract electrons from H(2)O, generating O(2) and a proton gradient subsequently used for ATP formation.</text>
</comment>
<comment type="cofactor">
    <text evidence="1">Binds multiple chlorophylls. PSII binds additional chlorophylls, carotenoids and specific lipids.</text>
</comment>
<comment type="subunit">
    <text evidence="1">PSII is composed of 1 copy each of membrane proteins PsbA, PsbB, PsbC, PsbD, PsbE, PsbF, PsbH, PsbI, PsbJ, PsbK, PsbL, PsbM, PsbT, PsbX, PsbY, PsbZ, Psb30/Ycf12, at least 3 peripheral proteins of the oxygen-evolving complex and a large number of cofactors. It forms dimeric complexes.</text>
</comment>
<comment type="subcellular location">
    <subcellularLocation>
        <location evidence="1">Plastid</location>
        <location evidence="1">Chloroplast thylakoid membrane</location>
        <topology evidence="1">Multi-pass membrane protein</topology>
    </subcellularLocation>
</comment>
<comment type="similarity">
    <text evidence="1">Belongs to the PsbB/PsbC family. PsbB subfamily.</text>
</comment>
<gene>
    <name evidence="1" type="primary">psbB</name>
</gene>
<feature type="chain" id="PRO_0000077485" description="Photosystem II CP47 reaction center protein">
    <location>
        <begin position="1"/>
        <end position="508"/>
    </location>
</feature>
<feature type="transmembrane region" description="Helical" evidence="1">
    <location>
        <begin position="21"/>
        <end position="36"/>
    </location>
</feature>
<feature type="transmembrane region" description="Helical" evidence="1">
    <location>
        <begin position="101"/>
        <end position="115"/>
    </location>
</feature>
<feature type="transmembrane region" description="Helical" evidence="1">
    <location>
        <begin position="140"/>
        <end position="156"/>
    </location>
</feature>
<feature type="transmembrane region" description="Helical" evidence="1">
    <location>
        <begin position="203"/>
        <end position="218"/>
    </location>
</feature>
<feature type="transmembrane region" description="Helical" evidence="1">
    <location>
        <begin position="237"/>
        <end position="252"/>
    </location>
</feature>
<feature type="transmembrane region" description="Helical" evidence="1">
    <location>
        <begin position="457"/>
        <end position="472"/>
    </location>
</feature>
<proteinExistence type="inferred from homology"/>
<name>PSBB_MAIZE</name>
<reference key="1">
    <citation type="journal article" date="1987" name="Curr. Genet.">
        <title>The maize plastid psbB-psbF-petB-petD gene cluster: spliced and unspliced petB and petD RNAs encode alternative products.</title>
        <authorList>
            <person name="Rock C.D."/>
            <person name="Barkan A."/>
            <person name="Taylor W.C."/>
        </authorList>
    </citation>
    <scope>NUCLEOTIDE SEQUENCE [LARGE SCALE GENOMIC DNA]</scope>
    <source>
        <strain>cv. B73</strain>
    </source>
</reference>
<reference key="2">
    <citation type="journal article" date="1995" name="J. Mol. Biol.">
        <title>Complete sequence of the maize chloroplast genome: gene content, hotspots of divergence and fine tuning of genetic information by transcript editing.</title>
        <authorList>
            <person name="Maier R.M."/>
            <person name="Neckermann K."/>
            <person name="Igloi G.L."/>
            <person name="Koessel H."/>
        </authorList>
    </citation>
    <scope>NUCLEOTIDE SEQUENCE [LARGE SCALE GENOMIC DNA]</scope>
    <source>
        <strain>cv. B73</strain>
    </source>
</reference>
<evidence type="ECO:0000255" key="1">
    <source>
        <dbReference type="HAMAP-Rule" id="MF_01495"/>
    </source>
</evidence>
<geneLocation type="chloroplast"/>
<protein>
    <recommendedName>
        <fullName evidence="1">Photosystem II CP47 reaction center protein</fullName>
    </recommendedName>
    <alternativeName>
        <fullName evidence="1">PSII 47 kDa protein</fullName>
    </alternativeName>
    <alternativeName>
        <fullName evidence="1">Protein CP-47</fullName>
    </alternativeName>
</protein>
<dbReference type="EMBL" id="X05422">
    <property type="protein sequence ID" value="CAA28997.1"/>
    <property type="molecule type" value="Genomic_DNA"/>
</dbReference>
<dbReference type="EMBL" id="X86563">
    <property type="protein sequence ID" value="CAA60311.1"/>
    <property type="molecule type" value="Genomic_DNA"/>
</dbReference>
<dbReference type="PIR" id="S07171">
    <property type="entry name" value="QJZMBB"/>
</dbReference>
<dbReference type="RefSeq" id="NP_043049.1">
    <property type="nucleotide sequence ID" value="NC_001666.2"/>
</dbReference>
<dbReference type="SMR" id="P05641"/>
<dbReference type="FunCoup" id="P05641">
    <property type="interactions" value="617"/>
</dbReference>
<dbReference type="STRING" id="4577.P05641"/>
<dbReference type="PaxDb" id="4577-GRMZM5G808939_P01"/>
<dbReference type="GeneID" id="845200"/>
<dbReference type="KEGG" id="zma:845200"/>
<dbReference type="MaizeGDB" id="69549"/>
<dbReference type="eggNOG" id="ENOG502QRV6">
    <property type="taxonomic scope" value="Eukaryota"/>
</dbReference>
<dbReference type="HOGENOM" id="CLU_028227_2_0_1"/>
<dbReference type="InParanoid" id="P05641"/>
<dbReference type="OMA" id="MYGSATT"/>
<dbReference type="OrthoDB" id="582790at2759"/>
<dbReference type="Proteomes" id="UP000007305">
    <property type="component" value="Chloroplast"/>
</dbReference>
<dbReference type="GO" id="GO:0009535">
    <property type="term" value="C:chloroplast thylakoid membrane"/>
    <property type="evidence" value="ECO:0007669"/>
    <property type="project" value="UniProtKB-SubCell"/>
</dbReference>
<dbReference type="GO" id="GO:0009523">
    <property type="term" value="C:photosystem II"/>
    <property type="evidence" value="ECO:0007669"/>
    <property type="project" value="UniProtKB-KW"/>
</dbReference>
<dbReference type="GO" id="GO:0016168">
    <property type="term" value="F:chlorophyll binding"/>
    <property type="evidence" value="ECO:0007669"/>
    <property type="project" value="UniProtKB-UniRule"/>
</dbReference>
<dbReference type="GO" id="GO:0045156">
    <property type="term" value="F:electron transporter, transferring electrons within the cyclic electron transport pathway of photosynthesis activity"/>
    <property type="evidence" value="ECO:0007669"/>
    <property type="project" value="InterPro"/>
</dbReference>
<dbReference type="GO" id="GO:0009772">
    <property type="term" value="P:photosynthetic electron transport in photosystem II"/>
    <property type="evidence" value="ECO:0007669"/>
    <property type="project" value="InterPro"/>
</dbReference>
<dbReference type="FunFam" id="3.10.680.10:FF:000001">
    <property type="entry name" value="Photosystem II CP47 reaction center protein"/>
    <property type="match status" value="1"/>
</dbReference>
<dbReference type="Gene3D" id="3.10.680.10">
    <property type="entry name" value="Photosystem II CP47 reaction center protein"/>
    <property type="match status" value="1"/>
</dbReference>
<dbReference type="HAMAP" id="MF_01495">
    <property type="entry name" value="PSII_PsbB_CP47"/>
    <property type="match status" value="1"/>
</dbReference>
<dbReference type="InterPro" id="IPR000932">
    <property type="entry name" value="PS_antenna-like"/>
</dbReference>
<dbReference type="InterPro" id="IPR036001">
    <property type="entry name" value="PS_II_antenna-like_sf"/>
</dbReference>
<dbReference type="InterPro" id="IPR017486">
    <property type="entry name" value="PSII_PsbB"/>
</dbReference>
<dbReference type="NCBIfam" id="TIGR03039">
    <property type="entry name" value="PS_II_CP47"/>
    <property type="match status" value="1"/>
</dbReference>
<dbReference type="PANTHER" id="PTHR33180">
    <property type="entry name" value="PHOTOSYSTEM II CP43 REACTION CENTER PROTEIN"/>
    <property type="match status" value="1"/>
</dbReference>
<dbReference type="PANTHER" id="PTHR33180:SF37">
    <property type="entry name" value="PHOTOSYSTEM II CP43 REACTION CENTER PROTEIN"/>
    <property type="match status" value="1"/>
</dbReference>
<dbReference type="Pfam" id="PF00421">
    <property type="entry name" value="PSII"/>
    <property type="match status" value="1"/>
</dbReference>
<dbReference type="SUPFAM" id="SSF161077">
    <property type="entry name" value="Photosystem II antenna protein-like"/>
    <property type="match status" value="1"/>
</dbReference>
<organism>
    <name type="scientific">Zea mays</name>
    <name type="common">Maize</name>
    <dbReference type="NCBI Taxonomy" id="4577"/>
    <lineage>
        <taxon>Eukaryota</taxon>
        <taxon>Viridiplantae</taxon>
        <taxon>Streptophyta</taxon>
        <taxon>Embryophyta</taxon>
        <taxon>Tracheophyta</taxon>
        <taxon>Spermatophyta</taxon>
        <taxon>Magnoliopsida</taxon>
        <taxon>Liliopsida</taxon>
        <taxon>Poales</taxon>
        <taxon>Poaceae</taxon>
        <taxon>PACMAD clade</taxon>
        <taxon>Panicoideae</taxon>
        <taxon>Andropogonodae</taxon>
        <taxon>Andropogoneae</taxon>
        <taxon>Tripsacinae</taxon>
        <taxon>Zea</taxon>
    </lineage>
</organism>